<feature type="signal peptide">
    <location>
        <begin position="1"/>
        <end position="26"/>
    </location>
</feature>
<feature type="chain" id="PRO_0000031695" description="Maltose/maltodextrin-binding periplasmic protein">
    <location>
        <begin position="27"/>
        <end position="396"/>
    </location>
</feature>
<comment type="function">
    <text evidence="1">Part of the ABC transporter complex MalEFGK involved in maltose/maltodextrin import. Binds maltose and higher maltodextrins.</text>
</comment>
<comment type="subunit">
    <text evidence="1">The complex is composed of two ATP-binding proteins (MalK), two transmembrane proteins (MalG and MalF) and a solute-binding protein (MalE).</text>
</comment>
<comment type="subcellular location">
    <subcellularLocation>
        <location evidence="1">Periplasm</location>
    </subcellularLocation>
</comment>
<comment type="similarity">
    <text evidence="2">Belongs to the bacterial solute-binding protein 1 family.</text>
</comment>
<reference key="1">
    <citation type="journal article" date="1989" name="Mol. Gen. Genet.">
        <title>Comparison of sequences from the malB regions of Salmonella typhimurium and Enterobacter aerogenes with Escherichia coli K12: a potential new regulatory site in the interoperonic region.</title>
        <authorList>
            <person name="Dahl M.K."/>
            <person name="Francoz E."/>
            <person name="Saurin W."/>
            <person name="Boos W."/>
            <person name="Manson M.D."/>
            <person name="Hofnung M."/>
        </authorList>
    </citation>
    <scope>NUCLEOTIDE SEQUENCE [GENOMIC DNA]</scope>
</reference>
<evidence type="ECO:0000250" key="1">
    <source>
        <dbReference type="UniProtKB" id="P0AEX9"/>
    </source>
</evidence>
<evidence type="ECO:0000305" key="2"/>
<organism>
    <name type="scientific">Klebsiella aerogenes</name>
    <name type="common">Enterobacter aerogenes</name>
    <dbReference type="NCBI Taxonomy" id="548"/>
    <lineage>
        <taxon>Bacteria</taxon>
        <taxon>Pseudomonadati</taxon>
        <taxon>Pseudomonadota</taxon>
        <taxon>Gammaproteobacteria</taxon>
        <taxon>Enterobacterales</taxon>
        <taxon>Enterobacteriaceae</taxon>
        <taxon>Klebsiella/Raoultella group</taxon>
        <taxon>Klebsiella</taxon>
    </lineage>
</organism>
<accession>P18815</accession>
<gene>
    <name type="primary">malE</name>
</gene>
<proteinExistence type="inferred from homology"/>
<name>MALE_KLEAE</name>
<keyword id="KW-0574">Periplasm</keyword>
<keyword id="KW-0732">Signal</keyword>
<keyword id="KW-0762">Sugar transport</keyword>
<keyword id="KW-0813">Transport</keyword>
<protein>
    <recommendedName>
        <fullName evidence="1">Maltose/maltodextrin-binding periplasmic protein</fullName>
    </recommendedName>
    <alternativeName>
        <fullName evidence="1">MMBP</fullName>
    </alternativeName>
    <alternativeName>
        <fullName evidence="1">Maltodextrin-binding protein</fullName>
    </alternativeName>
    <alternativeName>
        <fullName evidence="1">Maltose-binding protein</fullName>
        <shortName evidence="1">MBP</shortName>
    </alternativeName>
</protein>
<dbReference type="PIR" id="S05330">
    <property type="entry name" value="S05330"/>
</dbReference>
<dbReference type="SMR" id="P18815"/>
<dbReference type="STRING" id="548.EAG7_03819"/>
<dbReference type="GO" id="GO:0055052">
    <property type="term" value="C:ATP-binding cassette (ABC) transporter complex, substrate-binding subunit-containing"/>
    <property type="evidence" value="ECO:0007669"/>
    <property type="project" value="TreeGrafter"/>
</dbReference>
<dbReference type="GO" id="GO:0030288">
    <property type="term" value="C:outer membrane-bounded periplasmic space"/>
    <property type="evidence" value="ECO:0007669"/>
    <property type="project" value="UniProtKB-ARBA"/>
</dbReference>
<dbReference type="GO" id="GO:0015144">
    <property type="term" value="F:carbohydrate transmembrane transporter activity"/>
    <property type="evidence" value="ECO:0007669"/>
    <property type="project" value="InterPro"/>
</dbReference>
<dbReference type="GO" id="GO:1901982">
    <property type="term" value="F:maltose binding"/>
    <property type="evidence" value="ECO:0007669"/>
    <property type="project" value="TreeGrafter"/>
</dbReference>
<dbReference type="GO" id="GO:0042956">
    <property type="term" value="P:maltodextrin transmembrane transport"/>
    <property type="evidence" value="ECO:0007669"/>
    <property type="project" value="TreeGrafter"/>
</dbReference>
<dbReference type="GO" id="GO:0015768">
    <property type="term" value="P:maltose transport"/>
    <property type="evidence" value="ECO:0007669"/>
    <property type="project" value="TreeGrafter"/>
</dbReference>
<dbReference type="CDD" id="cd13656">
    <property type="entry name" value="PBP2_MBP"/>
    <property type="match status" value="1"/>
</dbReference>
<dbReference type="Gene3D" id="3.40.190.10">
    <property type="entry name" value="Periplasmic binding protein-like II"/>
    <property type="match status" value="2"/>
</dbReference>
<dbReference type="InterPro" id="IPR006060">
    <property type="entry name" value="Maltose/Cyclodextrin-bd"/>
</dbReference>
<dbReference type="InterPro" id="IPR006059">
    <property type="entry name" value="SBP"/>
</dbReference>
<dbReference type="InterPro" id="IPR006061">
    <property type="entry name" value="SBP_1_CS"/>
</dbReference>
<dbReference type="NCBIfam" id="NF007011">
    <property type="entry name" value="PRK09474.1"/>
    <property type="match status" value="1"/>
</dbReference>
<dbReference type="PANTHER" id="PTHR30061">
    <property type="entry name" value="MALTOSE-BINDING PERIPLASMIC PROTEIN"/>
    <property type="match status" value="1"/>
</dbReference>
<dbReference type="PANTHER" id="PTHR30061:SF50">
    <property type="entry name" value="MALTOSE_MALTODEXTRIN-BINDING PERIPLASMIC PROTEIN"/>
    <property type="match status" value="1"/>
</dbReference>
<dbReference type="Pfam" id="PF01547">
    <property type="entry name" value="SBP_bac_1"/>
    <property type="match status" value="1"/>
</dbReference>
<dbReference type="PRINTS" id="PR00181">
    <property type="entry name" value="MALTOSEBP"/>
</dbReference>
<dbReference type="SUPFAM" id="SSF53850">
    <property type="entry name" value="Periplasmic binding protein-like II"/>
    <property type="match status" value="1"/>
</dbReference>
<dbReference type="PROSITE" id="PS01037">
    <property type="entry name" value="SBP_BACTERIAL_1"/>
    <property type="match status" value="1"/>
</dbReference>
<sequence length="396" mass="43137">MKIKTGARILALSALTTMMFSASALAKIEEGKLVIWINGDKGYNGLAEVGKKFEKDTGIKVSVEHPDKLEEKFPQVAATGDGPDIIFWAHDRFGAYAQSGLLAEITPDKAFQDKLYPFTWDAVRYNGKLIAYPVAVEALSLIYNKDLVPNPPKTWEEIPALDKALKAKGKSALMFNLQEPYFTWPLIAADGGYAFKFENGKYDVKNVGVDSAGAKAGLTFLVDLIKNKHMNADTDYSIAEAAFNKGETAMTINGPWAWSNIDKSKVNYGVTLLPTFKGKPSKPFVGVLSAGINAASPNKELAKEFLENYLMTDPGLEAVNNDKPLGAVAVKSFQEKLEKDPRIAATMANAQKGEIMPNIPQMSAFWYAVRTAVINAASARQTVDAALKDAQGRITK</sequence>